<dbReference type="EC" id="4.3.3.6" evidence="1"/>
<dbReference type="EC" id="3.5.1.2" evidence="1"/>
<dbReference type="EMBL" id="CP001638">
    <property type="protein sequence ID" value="ACS22954.1"/>
    <property type="molecule type" value="Genomic_DNA"/>
</dbReference>
<dbReference type="SMR" id="C5D338"/>
<dbReference type="STRING" id="471223.GWCH70_0012"/>
<dbReference type="KEGG" id="gwc:GWCH70_0012"/>
<dbReference type="eggNOG" id="COG0311">
    <property type="taxonomic scope" value="Bacteria"/>
</dbReference>
<dbReference type="HOGENOM" id="CLU_069674_2_0_9"/>
<dbReference type="OrthoDB" id="9810320at2"/>
<dbReference type="UniPathway" id="UPA00245"/>
<dbReference type="GO" id="GO:0005829">
    <property type="term" value="C:cytosol"/>
    <property type="evidence" value="ECO:0007669"/>
    <property type="project" value="TreeGrafter"/>
</dbReference>
<dbReference type="GO" id="GO:1903600">
    <property type="term" value="C:glutaminase complex"/>
    <property type="evidence" value="ECO:0007669"/>
    <property type="project" value="TreeGrafter"/>
</dbReference>
<dbReference type="GO" id="GO:0004359">
    <property type="term" value="F:glutaminase activity"/>
    <property type="evidence" value="ECO:0007669"/>
    <property type="project" value="UniProtKB-UniRule"/>
</dbReference>
<dbReference type="GO" id="GO:0036381">
    <property type="term" value="F:pyridoxal 5'-phosphate synthase (glutamine hydrolysing) activity"/>
    <property type="evidence" value="ECO:0007669"/>
    <property type="project" value="UniProtKB-UniRule"/>
</dbReference>
<dbReference type="GO" id="GO:0006543">
    <property type="term" value="P:glutamine catabolic process"/>
    <property type="evidence" value="ECO:0007669"/>
    <property type="project" value="UniProtKB-UniRule"/>
</dbReference>
<dbReference type="GO" id="GO:0042823">
    <property type="term" value="P:pyridoxal phosphate biosynthetic process"/>
    <property type="evidence" value="ECO:0007669"/>
    <property type="project" value="UniProtKB-UniRule"/>
</dbReference>
<dbReference type="GO" id="GO:0008614">
    <property type="term" value="P:pyridoxine metabolic process"/>
    <property type="evidence" value="ECO:0007669"/>
    <property type="project" value="TreeGrafter"/>
</dbReference>
<dbReference type="CDD" id="cd01749">
    <property type="entry name" value="GATase1_PB"/>
    <property type="match status" value="1"/>
</dbReference>
<dbReference type="FunFam" id="3.40.50.880:FF:000010">
    <property type="entry name" value="uncharacterized protein LOC100176842 isoform X2"/>
    <property type="match status" value="1"/>
</dbReference>
<dbReference type="Gene3D" id="3.40.50.880">
    <property type="match status" value="1"/>
</dbReference>
<dbReference type="HAMAP" id="MF_01615">
    <property type="entry name" value="PdxT"/>
    <property type="match status" value="1"/>
</dbReference>
<dbReference type="InterPro" id="IPR029062">
    <property type="entry name" value="Class_I_gatase-like"/>
</dbReference>
<dbReference type="InterPro" id="IPR002161">
    <property type="entry name" value="PdxT/SNO"/>
</dbReference>
<dbReference type="InterPro" id="IPR021196">
    <property type="entry name" value="PdxT/SNO_CS"/>
</dbReference>
<dbReference type="NCBIfam" id="TIGR03800">
    <property type="entry name" value="PLP_synth_Pdx2"/>
    <property type="match status" value="1"/>
</dbReference>
<dbReference type="PANTHER" id="PTHR31559">
    <property type="entry name" value="PYRIDOXAL 5'-PHOSPHATE SYNTHASE SUBUNIT SNO"/>
    <property type="match status" value="1"/>
</dbReference>
<dbReference type="PANTHER" id="PTHR31559:SF0">
    <property type="entry name" value="PYRIDOXAL 5'-PHOSPHATE SYNTHASE SUBUNIT SNO1-RELATED"/>
    <property type="match status" value="1"/>
</dbReference>
<dbReference type="Pfam" id="PF01174">
    <property type="entry name" value="SNO"/>
    <property type="match status" value="1"/>
</dbReference>
<dbReference type="PIRSF" id="PIRSF005639">
    <property type="entry name" value="Glut_amidoT_SNO"/>
    <property type="match status" value="1"/>
</dbReference>
<dbReference type="SUPFAM" id="SSF52317">
    <property type="entry name" value="Class I glutamine amidotransferase-like"/>
    <property type="match status" value="1"/>
</dbReference>
<dbReference type="PROSITE" id="PS01236">
    <property type="entry name" value="PDXT_SNO_1"/>
    <property type="match status" value="1"/>
</dbReference>
<dbReference type="PROSITE" id="PS51130">
    <property type="entry name" value="PDXT_SNO_2"/>
    <property type="match status" value="1"/>
</dbReference>
<name>PDXT_GEOSW</name>
<sequence length="192" mass="21182">MMKIGVLGLQGAVQEHVRSIEACGAEAVVVKKIEQLEEIDGLILPGGESTTMRRLMDKYGFIEPLKQFAAAGKPMFGTCAGLILLAKRIVGYDEPHLGLMDITVERNSFGRQRESFEAELSIAGVADDFIGVFIRAPHIVEVGEDVEVLAKYEGRIVAARQGQFLGCSFHPELTDDYRMTQYFLNMVKEAKA</sequence>
<proteinExistence type="inferred from homology"/>
<evidence type="ECO:0000255" key="1">
    <source>
        <dbReference type="HAMAP-Rule" id="MF_01615"/>
    </source>
</evidence>
<feature type="chain" id="PRO_1000215715" description="Pyridoxal 5'-phosphate synthase subunit PdxT">
    <location>
        <begin position="1"/>
        <end position="192"/>
    </location>
</feature>
<feature type="active site" description="Nucleophile" evidence="1">
    <location>
        <position position="79"/>
    </location>
</feature>
<feature type="active site" description="Charge relay system" evidence="1">
    <location>
        <position position="170"/>
    </location>
</feature>
<feature type="active site" description="Charge relay system" evidence="1">
    <location>
        <position position="172"/>
    </location>
</feature>
<feature type="binding site" evidence="1">
    <location>
        <begin position="47"/>
        <end position="49"/>
    </location>
    <ligand>
        <name>L-glutamine</name>
        <dbReference type="ChEBI" id="CHEBI:58359"/>
    </ligand>
</feature>
<feature type="binding site" evidence="1">
    <location>
        <position position="106"/>
    </location>
    <ligand>
        <name>L-glutamine</name>
        <dbReference type="ChEBI" id="CHEBI:58359"/>
    </ligand>
</feature>
<feature type="binding site" evidence="1">
    <location>
        <begin position="134"/>
        <end position="135"/>
    </location>
    <ligand>
        <name>L-glutamine</name>
        <dbReference type="ChEBI" id="CHEBI:58359"/>
    </ligand>
</feature>
<keyword id="KW-0315">Glutamine amidotransferase</keyword>
<keyword id="KW-0378">Hydrolase</keyword>
<keyword id="KW-0456">Lyase</keyword>
<keyword id="KW-0663">Pyridoxal phosphate</keyword>
<reference key="1">
    <citation type="submission" date="2009-06" db="EMBL/GenBank/DDBJ databases">
        <title>Complete sequence of chromosome of Geopacillus sp. WCH70.</title>
        <authorList>
            <consortium name="US DOE Joint Genome Institute"/>
            <person name="Lucas S."/>
            <person name="Copeland A."/>
            <person name="Lapidus A."/>
            <person name="Glavina del Rio T."/>
            <person name="Dalin E."/>
            <person name="Tice H."/>
            <person name="Bruce D."/>
            <person name="Goodwin L."/>
            <person name="Pitluck S."/>
            <person name="Chertkov O."/>
            <person name="Brettin T."/>
            <person name="Detter J.C."/>
            <person name="Han C."/>
            <person name="Larimer F."/>
            <person name="Land M."/>
            <person name="Hauser L."/>
            <person name="Kyrpides N."/>
            <person name="Mikhailova N."/>
            <person name="Brumm P."/>
            <person name="Mead D.A."/>
            <person name="Richardson P."/>
        </authorList>
    </citation>
    <scope>NUCLEOTIDE SEQUENCE [LARGE SCALE GENOMIC DNA]</scope>
    <source>
        <strain>WCH70</strain>
    </source>
</reference>
<gene>
    <name evidence="1" type="primary">pdxT</name>
    <name type="ordered locus">GWCH70_0012</name>
</gene>
<protein>
    <recommendedName>
        <fullName evidence="1">Pyridoxal 5'-phosphate synthase subunit PdxT</fullName>
        <ecNumber evidence="1">4.3.3.6</ecNumber>
    </recommendedName>
    <alternativeName>
        <fullName evidence="1">Pdx2</fullName>
    </alternativeName>
    <alternativeName>
        <fullName evidence="1">Pyridoxal 5'-phosphate synthase glutaminase subunit</fullName>
        <ecNumber evidence="1">3.5.1.2</ecNumber>
    </alternativeName>
</protein>
<comment type="function">
    <text evidence="1">Catalyzes the hydrolysis of glutamine to glutamate and ammonia as part of the biosynthesis of pyridoxal 5'-phosphate. The resulting ammonia molecule is channeled to the active site of PdxS.</text>
</comment>
<comment type="catalytic activity">
    <reaction evidence="1">
        <text>aldehydo-D-ribose 5-phosphate + D-glyceraldehyde 3-phosphate + L-glutamine = pyridoxal 5'-phosphate + L-glutamate + phosphate + 3 H2O + H(+)</text>
        <dbReference type="Rhea" id="RHEA:31507"/>
        <dbReference type="ChEBI" id="CHEBI:15377"/>
        <dbReference type="ChEBI" id="CHEBI:15378"/>
        <dbReference type="ChEBI" id="CHEBI:29985"/>
        <dbReference type="ChEBI" id="CHEBI:43474"/>
        <dbReference type="ChEBI" id="CHEBI:58273"/>
        <dbReference type="ChEBI" id="CHEBI:58359"/>
        <dbReference type="ChEBI" id="CHEBI:59776"/>
        <dbReference type="ChEBI" id="CHEBI:597326"/>
        <dbReference type="EC" id="4.3.3.6"/>
    </reaction>
</comment>
<comment type="catalytic activity">
    <reaction evidence="1">
        <text>L-glutamine + H2O = L-glutamate + NH4(+)</text>
        <dbReference type="Rhea" id="RHEA:15889"/>
        <dbReference type="ChEBI" id="CHEBI:15377"/>
        <dbReference type="ChEBI" id="CHEBI:28938"/>
        <dbReference type="ChEBI" id="CHEBI:29985"/>
        <dbReference type="ChEBI" id="CHEBI:58359"/>
        <dbReference type="EC" id="3.5.1.2"/>
    </reaction>
</comment>
<comment type="pathway">
    <text evidence="1">Cofactor biosynthesis; pyridoxal 5'-phosphate biosynthesis.</text>
</comment>
<comment type="subunit">
    <text evidence="1">In the presence of PdxS, forms a dodecamer of heterodimers. Only shows activity in the heterodimer.</text>
</comment>
<comment type="similarity">
    <text evidence="1">Belongs to the glutaminase PdxT/SNO family.</text>
</comment>
<accession>C5D338</accession>
<organism>
    <name type="scientific">Geobacillus sp. (strain WCH70)</name>
    <dbReference type="NCBI Taxonomy" id="471223"/>
    <lineage>
        <taxon>Bacteria</taxon>
        <taxon>Bacillati</taxon>
        <taxon>Bacillota</taxon>
        <taxon>Bacilli</taxon>
        <taxon>Bacillales</taxon>
        <taxon>Anoxybacillaceae</taxon>
        <taxon>Geobacillus</taxon>
    </lineage>
</organism>